<organism>
    <name type="scientific">Rhizobium johnstonii (strain DSM 114642 / LMG 32736 / 3841)</name>
    <name type="common">Rhizobium leguminosarum bv. viciae</name>
    <dbReference type="NCBI Taxonomy" id="216596"/>
    <lineage>
        <taxon>Bacteria</taxon>
        <taxon>Pseudomonadati</taxon>
        <taxon>Pseudomonadota</taxon>
        <taxon>Alphaproteobacteria</taxon>
        <taxon>Hyphomicrobiales</taxon>
        <taxon>Rhizobiaceae</taxon>
        <taxon>Rhizobium/Agrobacterium group</taxon>
        <taxon>Rhizobium</taxon>
        <taxon>Rhizobium johnstonii</taxon>
    </lineage>
</organism>
<comment type="catalytic activity">
    <reaction evidence="1">
        <text>2-formamido-N(1)-(5-O-phospho-beta-D-ribosyl)acetamidine + ATP = 5-amino-1-(5-phospho-beta-D-ribosyl)imidazole + ADP + phosphate + H(+)</text>
        <dbReference type="Rhea" id="RHEA:23032"/>
        <dbReference type="ChEBI" id="CHEBI:15378"/>
        <dbReference type="ChEBI" id="CHEBI:30616"/>
        <dbReference type="ChEBI" id="CHEBI:43474"/>
        <dbReference type="ChEBI" id="CHEBI:137981"/>
        <dbReference type="ChEBI" id="CHEBI:147287"/>
        <dbReference type="ChEBI" id="CHEBI:456216"/>
        <dbReference type="EC" id="6.3.3.1"/>
    </reaction>
</comment>
<comment type="pathway">
    <text evidence="1">Purine metabolism; IMP biosynthesis via de novo pathway; 5-amino-1-(5-phospho-D-ribosyl)imidazole from N(2)-formyl-N(1)-(5-phospho-D-ribosyl)glycinamide: step 2/2.</text>
</comment>
<comment type="subcellular location">
    <subcellularLocation>
        <location evidence="1">Cytoplasm</location>
    </subcellularLocation>
</comment>
<comment type="similarity">
    <text evidence="1">Belongs to the AIR synthase family.</text>
</comment>
<sequence length="357" mass="36743">MSQSGKNGLTYSDAGVDIDAGNLLVEKIKPAVRSTRRPGADGEIGGFGGLFDLKAAGFTDPVLVAANDGVGTKLKIAIDADYHDTVGIDLVAMCVNDLVVQGAEPLFFLDYFATGKLDPDQGAAIVGGIAAGCREAGCALIGGETAEMPGMYSSGDYDLAGFAVGAAERGKLLPSGDIAEGDVILGLASSGVHSNGFSLVRKIVELSGLDWDSPAPFTEDKKLGEALLEPTRIYVKPLLKAIRETGAIKALAHITGGGFPENIPRVLPKHLAAEIDLATVKVPPVFSWLAKTGGVEAKEMLRTFNCGVGMIAVVAGENVATVSAALEAEGETVITLGRMIAREEGAAGTVYKGTLAI</sequence>
<keyword id="KW-0067">ATP-binding</keyword>
<keyword id="KW-0963">Cytoplasm</keyword>
<keyword id="KW-0436">Ligase</keyword>
<keyword id="KW-0547">Nucleotide-binding</keyword>
<keyword id="KW-0658">Purine biosynthesis</keyword>
<evidence type="ECO:0000255" key="1">
    <source>
        <dbReference type="HAMAP-Rule" id="MF_00741"/>
    </source>
</evidence>
<dbReference type="EC" id="6.3.3.1" evidence="1"/>
<dbReference type="EMBL" id="AM236080">
    <property type="protein sequence ID" value="CAK07091.1"/>
    <property type="molecule type" value="Genomic_DNA"/>
</dbReference>
<dbReference type="RefSeq" id="WP_011651278.1">
    <property type="nucleotide sequence ID" value="NC_008380.1"/>
</dbReference>
<dbReference type="SMR" id="Q1MIW9"/>
<dbReference type="EnsemblBacteria" id="CAK07091">
    <property type="protein sequence ID" value="CAK07091"/>
    <property type="gene ID" value="RL1596"/>
</dbReference>
<dbReference type="KEGG" id="rle:RL1596"/>
<dbReference type="eggNOG" id="COG0150">
    <property type="taxonomic scope" value="Bacteria"/>
</dbReference>
<dbReference type="HOGENOM" id="CLU_047116_0_0_5"/>
<dbReference type="UniPathway" id="UPA00074">
    <property type="reaction ID" value="UER00129"/>
</dbReference>
<dbReference type="Proteomes" id="UP000006575">
    <property type="component" value="Chromosome"/>
</dbReference>
<dbReference type="GO" id="GO:0005829">
    <property type="term" value="C:cytosol"/>
    <property type="evidence" value="ECO:0007669"/>
    <property type="project" value="TreeGrafter"/>
</dbReference>
<dbReference type="GO" id="GO:0005524">
    <property type="term" value="F:ATP binding"/>
    <property type="evidence" value="ECO:0007669"/>
    <property type="project" value="UniProtKB-KW"/>
</dbReference>
<dbReference type="GO" id="GO:0004637">
    <property type="term" value="F:phosphoribosylamine-glycine ligase activity"/>
    <property type="evidence" value="ECO:0007669"/>
    <property type="project" value="TreeGrafter"/>
</dbReference>
<dbReference type="GO" id="GO:0004641">
    <property type="term" value="F:phosphoribosylformylglycinamidine cyclo-ligase activity"/>
    <property type="evidence" value="ECO:0007669"/>
    <property type="project" value="UniProtKB-UniRule"/>
</dbReference>
<dbReference type="GO" id="GO:0006189">
    <property type="term" value="P:'de novo' IMP biosynthetic process"/>
    <property type="evidence" value="ECO:0007669"/>
    <property type="project" value="UniProtKB-UniRule"/>
</dbReference>
<dbReference type="GO" id="GO:0046084">
    <property type="term" value="P:adenine biosynthetic process"/>
    <property type="evidence" value="ECO:0007669"/>
    <property type="project" value="TreeGrafter"/>
</dbReference>
<dbReference type="CDD" id="cd02196">
    <property type="entry name" value="PurM"/>
    <property type="match status" value="1"/>
</dbReference>
<dbReference type="FunFam" id="3.30.1330.10:FF:000001">
    <property type="entry name" value="Phosphoribosylformylglycinamidine cyclo-ligase"/>
    <property type="match status" value="1"/>
</dbReference>
<dbReference type="FunFam" id="3.90.650.10:FF:000007">
    <property type="entry name" value="Trifunctional purine biosynthetic protein adenosine-3"/>
    <property type="match status" value="1"/>
</dbReference>
<dbReference type="Gene3D" id="3.90.650.10">
    <property type="entry name" value="PurM-like C-terminal domain"/>
    <property type="match status" value="1"/>
</dbReference>
<dbReference type="Gene3D" id="3.30.1330.10">
    <property type="entry name" value="PurM-like, N-terminal domain"/>
    <property type="match status" value="1"/>
</dbReference>
<dbReference type="HAMAP" id="MF_00741">
    <property type="entry name" value="AIRS"/>
    <property type="match status" value="1"/>
</dbReference>
<dbReference type="InterPro" id="IPR010918">
    <property type="entry name" value="PurM-like_C_dom"/>
</dbReference>
<dbReference type="InterPro" id="IPR036676">
    <property type="entry name" value="PurM-like_C_sf"/>
</dbReference>
<dbReference type="InterPro" id="IPR016188">
    <property type="entry name" value="PurM-like_N"/>
</dbReference>
<dbReference type="InterPro" id="IPR036921">
    <property type="entry name" value="PurM-like_N_sf"/>
</dbReference>
<dbReference type="InterPro" id="IPR004733">
    <property type="entry name" value="PurM_cligase"/>
</dbReference>
<dbReference type="NCBIfam" id="TIGR00878">
    <property type="entry name" value="purM"/>
    <property type="match status" value="1"/>
</dbReference>
<dbReference type="PANTHER" id="PTHR10520:SF12">
    <property type="entry name" value="TRIFUNCTIONAL PURINE BIOSYNTHETIC PROTEIN ADENOSINE-3"/>
    <property type="match status" value="1"/>
</dbReference>
<dbReference type="PANTHER" id="PTHR10520">
    <property type="entry name" value="TRIFUNCTIONAL PURINE BIOSYNTHETIC PROTEIN ADENOSINE-3-RELATED"/>
    <property type="match status" value="1"/>
</dbReference>
<dbReference type="Pfam" id="PF00586">
    <property type="entry name" value="AIRS"/>
    <property type="match status" value="1"/>
</dbReference>
<dbReference type="Pfam" id="PF02769">
    <property type="entry name" value="AIRS_C"/>
    <property type="match status" value="1"/>
</dbReference>
<dbReference type="SUPFAM" id="SSF56042">
    <property type="entry name" value="PurM C-terminal domain-like"/>
    <property type="match status" value="1"/>
</dbReference>
<dbReference type="SUPFAM" id="SSF55326">
    <property type="entry name" value="PurM N-terminal domain-like"/>
    <property type="match status" value="1"/>
</dbReference>
<name>PUR5_RHIJ3</name>
<reference key="1">
    <citation type="journal article" date="2006" name="Genome Biol.">
        <title>The genome of Rhizobium leguminosarum has recognizable core and accessory components.</title>
        <authorList>
            <person name="Young J.P.W."/>
            <person name="Crossman L.C."/>
            <person name="Johnston A.W.B."/>
            <person name="Thomson N.R."/>
            <person name="Ghazoui Z.F."/>
            <person name="Hull K.H."/>
            <person name="Wexler M."/>
            <person name="Curson A.R.J."/>
            <person name="Todd J.D."/>
            <person name="Poole P.S."/>
            <person name="Mauchline T.H."/>
            <person name="East A.K."/>
            <person name="Quail M.A."/>
            <person name="Churcher C."/>
            <person name="Arrowsmith C."/>
            <person name="Cherevach I."/>
            <person name="Chillingworth T."/>
            <person name="Clarke K."/>
            <person name="Cronin A."/>
            <person name="Davis P."/>
            <person name="Fraser A."/>
            <person name="Hance Z."/>
            <person name="Hauser H."/>
            <person name="Jagels K."/>
            <person name="Moule S."/>
            <person name="Mungall K."/>
            <person name="Norbertczak H."/>
            <person name="Rabbinowitsch E."/>
            <person name="Sanders M."/>
            <person name="Simmonds M."/>
            <person name="Whitehead S."/>
            <person name="Parkhill J."/>
        </authorList>
    </citation>
    <scope>NUCLEOTIDE SEQUENCE [LARGE SCALE GENOMIC DNA]</scope>
    <source>
        <strain>DSM 114642 / LMG 32736 / 3841</strain>
    </source>
</reference>
<proteinExistence type="inferred from homology"/>
<feature type="chain" id="PRO_0000258392" description="Phosphoribosylformylglycinamidine cyclo-ligase">
    <location>
        <begin position="1"/>
        <end position="357"/>
    </location>
</feature>
<protein>
    <recommendedName>
        <fullName evidence="1">Phosphoribosylformylglycinamidine cyclo-ligase</fullName>
        <ecNumber evidence="1">6.3.3.1</ecNumber>
    </recommendedName>
    <alternativeName>
        <fullName evidence="1">AIR synthase</fullName>
    </alternativeName>
    <alternativeName>
        <fullName evidence="1">AIRS</fullName>
    </alternativeName>
    <alternativeName>
        <fullName evidence="1">Phosphoribosyl-aminoimidazole synthetase</fullName>
    </alternativeName>
</protein>
<gene>
    <name evidence="1" type="primary">purM</name>
    <name type="ordered locus">RL1596</name>
</gene>
<accession>Q1MIW9</accession>